<feature type="chain" id="PRO_0000161436" description="tRNA uridine(34) hydroxylase">
    <location>
        <begin position="1"/>
        <end position="309"/>
    </location>
</feature>
<feature type="domain" description="Rhodanese" evidence="1">
    <location>
        <begin position="126"/>
        <end position="220"/>
    </location>
</feature>
<feature type="active site" description="Cysteine persulfide intermediate" evidence="1">
    <location>
        <position position="180"/>
    </location>
</feature>
<reference key="1">
    <citation type="journal article" date="2001" name="DNA Res.">
        <title>Complete genomic sequence of the filamentous nitrogen-fixing cyanobacterium Anabaena sp. strain PCC 7120.</title>
        <authorList>
            <person name="Kaneko T."/>
            <person name="Nakamura Y."/>
            <person name="Wolk C.P."/>
            <person name="Kuritz T."/>
            <person name="Sasamoto S."/>
            <person name="Watanabe A."/>
            <person name="Iriguchi M."/>
            <person name="Ishikawa A."/>
            <person name="Kawashima K."/>
            <person name="Kimura T."/>
            <person name="Kishida Y."/>
            <person name="Kohara M."/>
            <person name="Matsumoto M."/>
            <person name="Matsuno A."/>
            <person name="Muraki A."/>
            <person name="Nakazaki N."/>
            <person name="Shimpo S."/>
            <person name="Sugimoto M."/>
            <person name="Takazawa M."/>
            <person name="Yamada M."/>
            <person name="Yasuda M."/>
            <person name="Tabata S."/>
        </authorList>
    </citation>
    <scope>NUCLEOTIDE SEQUENCE [LARGE SCALE GENOMIC DNA]</scope>
    <source>
        <strain>PCC 7120 / SAG 25.82 / UTEX 2576</strain>
    </source>
</reference>
<comment type="function">
    <text evidence="1">Catalyzes oxygen-dependent 5-hydroxyuridine (ho5U) modification at position 34 in tRNAs.</text>
</comment>
<comment type="catalytic activity">
    <reaction evidence="1">
        <text>uridine(34) in tRNA + AH2 + O2 = 5-hydroxyuridine(34) in tRNA + A + H2O</text>
        <dbReference type="Rhea" id="RHEA:64224"/>
        <dbReference type="Rhea" id="RHEA-COMP:11727"/>
        <dbReference type="Rhea" id="RHEA-COMP:13381"/>
        <dbReference type="ChEBI" id="CHEBI:13193"/>
        <dbReference type="ChEBI" id="CHEBI:15377"/>
        <dbReference type="ChEBI" id="CHEBI:15379"/>
        <dbReference type="ChEBI" id="CHEBI:17499"/>
        <dbReference type="ChEBI" id="CHEBI:65315"/>
        <dbReference type="ChEBI" id="CHEBI:136877"/>
    </reaction>
</comment>
<comment type="similarity">
    <text evidence="1">Belongs to the TrhO family.</text>
</comment>
<sequence>MNQENTQIVAAFYKFVSLPDFAEKQEPLLAYCLAQNIKGTILLAKEGINGTIAGSRLSIDNVLSYLRSDLRLQDLEHKESTADTPPFERMKVRLKKEIVTLGLPEVDPNEQVGAYVTPEEWNELISDPEVIVIDTRNDYEVHIGTFQGAQNPQTNSFRDFPEYVRQNLDPNQHKKVAMFCTGGIRCEKASSFMLSQGFAEVYHLKGGILKYLEQIPPEESLWQGECFVFDERIAVVHGLEPGTHELCFCCGHPLAEEDKASLQYEEGISCPHCFDSLTEDKRMRQQEKWRQYQLKNSHSLGNSKLGVAD</sequence>
<organism>
    <name type="scientific">Nostoc sp. (strain PCC 7120 / SAG 25.82 / UTEX 2576)</name>
    <dbReference type="NCBI Taxonomy" id="103690"/>
    <lineage>
        <taxon>Bacteria</taxon>
        <taxon>Bacillati</taxon>
        <taxon>Cyanobacteriota</taxon>
        <taxon>Cyanophyceae</taxon>
        <taxon>Nostocales</taxon>
        <taxon>Nostocaceae</taxon>
        <taxon>Nostoc</taxon>
    </lineage>
</organism>
<accession>Q8YZS3</accession>
<protein>
    <recommendedName>
        <fullName evidence="1">tRNA uridine(34) hydroxylase</fullName>
        <ecNumber evidence="1">1.14.-.-</ecNumber>
    </recommendedName>
    <alternativeName>
        <fullName evidence="1">tRNA hydroxylation protein O</fullName>
    </alternativeName>
</protein>
<evidence type="ECO:0000255" key="1">
    <source>
        <dbReference type="HAMAP-Rule" id="MF_00469"/>
    </source>
</evidence>
<keyword id="KW-0560">Oxidoreductase</keyword>
<keyword id="KW-1185">Reference proteome</keyword>
<keyword id="KW-0819">tRNA processing</keyword>
<dbReference type="EC" id="1.14.-.-" evidence="1"/>
<dbReference type="EMBL" id="BA000019">
    <property type="protein sequence ID" value="BAB72342.1"/>
    <property type="molecule type" value="Genomic_DNA"/>
</dbReference>
<dbReference type="PIR" id="AG1854">
    <property type="entry name" value="AG1854"/>
</dbReference>
<dbReference type="RefSeq" id="WP_010994560.1">
    <property type="nucleotide sequence ID" value="NZ_RSCN01000017.1"/>
</dbReference>
<dbReference type="SMR" id="Q8YZS3"/>
<dbReference type="KEGG" id="ana:all0384"/>
<dbReference type="eggNOG" id="COG1054">
    <property type="taxonomic scope" value="Bacteria"/>
</dbReference>
<dbReference type="OrthoDB" id="9778326at2"/>
<dbReference type="Proteomes" id="UP000002483">
    <property type="component" value="Chromosome"/>
</dbReference>
<dbReference type="GO" id="GO:0016705">
    <property type="term" value="F:oxidoreductase activity, acting on paired donors, with incorporation or reduction of molecular oxygen"/>
    <property type="evidence" value="ECO:0007669"/>
    <property type="project" value="UniProtKB-UniRule"/>
</dbReference>
<dbReference type="GO" id="GO:0006400">
    <property type="term" value="P:tRNA modification"/>
    <property type="evidence" value="ECO:0007669"/>
    <property type="project" value="UniProtKB-UniRule"/>
</dbReference>
<dbReference type="CDD" id="cd01518">
    <property type="entry name" value="RHOD_YceA"/>
    <property type="match status" value="1"/>
</dbReference>
<dbReference type="Gene3D" id="3.30.70.100">
    <property type="match status" value="1"/>
</dbReference>
<dbReference type="Gene3D" id="3.40.250.10">
    <property type="entry name" value="Rhodanese-like domain"/>
    <property type="match status" value="1"/>
</dbReference>
<dbReference type="HAMAP" id="MF_00469">
    <property type="entry name" value="TrhO"/>
    <property type="match status" value="1"/>
</dbReference>
<dbReference type="InterPro" id="IPR001763">
    <property type="entry name" value="Rhodanese-like_dom"/>
</dbReference>
<dbReference type="InterPro" id="IPR036873">
    <property type="entry name" value="Rhodanese-like_dom_sf"/>
</dbReference>
<dbReference type="InterPro" id="IPR020936">
    <property type="entry name" value="TrhO"/>
</dbReference>
<dbReference type="InterPro" id="IPR040503">
    <property type="entry name" value="TRHO_N"/>
</dbReference>
<dbReference type="NCBIfam" id="NF001136">
    <property type="entry name" value="PRK00142.1-4"/>
    <property type="match status" value="1"/>
</dbReference>
<dbReference type="PANTHER" id="PTHR43268:SF3">
    <property type="entry name" value="RHODANESE-LIKE DOMAIN-CONTAINING PROTEIN 7-RELATED"/>
    <property type="match status" value="1"/>
</dbReference>
<dbReference type="PANTHER" id="PTHR43268">
    <property type="entry name" value="THIOSULFATE SULFURTRANSFERASE/RHODANESE-LIKE DOMAIN-CONTAINING PROTEIN 2"/>
    <property type="match status" value="1"/>
</dbReference>
<dbReference type="Pfam" id="PF00581">
    <property type="entry name" value="Rhodanese"/>
    <property type="match status" value="1"/>
</dbReference>
<dbReference type="Pfam" id="PF17773">
    <property type="entry name" value="UPF0176_N"/>
    <property type="match status" value="1"/>
</dbReference>
<dbReference type="SMART" id="SM00450">
    <property type="entry name" value="RHOD"/>
    <property type="match status" value="1"/>
</dbReference>
<dbReference type="SUPFAM" id="SSF52821">
    <property type="entry name" value="Rhodanese/Cell cycle control phosphatase"/>
    <property type="match status" value="1"/>
</dbReference>
<dbReference type="PROSITE" id="PS50206">
    <property type="entry name" value="RHODANESE_3"/>
    <property type="match status" value="1"/>
</dbReference>
<gene>
    <name evidence="1" type="primary">trhO</name>
    <name type="ordered locus">all0384</name>
</gene>
<proteinExistence type="inferred from homology"/>
<name>TRHO_NOSS1</name>